<proteinExistence type="inferred from homology"/>
<organism>
    <name type="scientific">Shigella flexneri</name>
    <dbReference type="NCBI Taxonomy" id="623"/>
    <lineage>
        <taxon>Bacteria</taxon>
        <taxon>Pseudomonadati</taxon>
        <taxon>Pseudomonadota</taxon>
        <taxon>Gammaproteobacteria</taxon>
        <taxon>Enterobacterales</taxon>
        <taxon>Enterobacteriaceae</taxon>
        <taxon>Shigella</taxon>
    </lineage>
</organism>
<keyword id="KW-0997">Cell inner membrane</keyword>
<keyword id="KW-1003">Cell membrane</keyword>
<keyword id="KW-0406">Ion transport</keyword>
<keyword id="KW-0408">Iron</keyword>
<keyword id="KW-0472">Membrane</keyword>
<keyword id="KW-0479">Metal-binding</keyword>
<keyword id="KW-1185">Reference proteome</keyword>
<keyword id="KW-0812">Transmembrane</keyword>
<keyword id="KW-1133">Transmembrane helix</keyword>
<keyword id="KW-0813">Transport</keyword>
<keyword id="KW-0862">Zinc</keyword>
<keyword id="KW-0864">Zinc transport</keyword>
<dbReference type="EMBL" id="AE005674">
    <property type="protein sequence ID" value="AAN44558.2"/>
    <property type="molecule type" value="Genomic_DNA"/>
</dbReference>
<dbReference type="EMBL" id="AE014073">
    <property type="protein sequence ID" value="AAP18371.1"/>
    <property type="molecule type" value="Genomic_DNA"/>
</dbReference>
<dbReference type="RefSeq" id="WP_005051906.1">
    <property type="nucleotide sequence ID" value="NZ_WPGW01000100.1"/>
</dbReference>
<dbReference type="SMR" id="Q7UBJ3"/>
<dbReference type="STRING" id="198214.SF3080"/>
<dbReference type="PaxDb" id="198214-SF3080"/>
<dbReference type="KEGG" id="sfl:SF3080"/>
<dbReference type="KEGG" id="sfx:S3285"/>
<dbReference type="PATRIC" id="fig|198214.7.peg.3655"/>
<dbReference type="HOGENOM" id="CLU_015114_1_3_6"/>
<dbReference type="Proteomes" id="UP000001006">
    <property type="component" value="Chromosome"/>
</dbReference>
<dbReference type="Proteomes" id="UP000002673">
    <property type="component" value="Chromosome"/>
</dbReference>
<dbReference type="GO" id="GO:0005886">
    <property type="term" value="C:plasma membrane"/>
    <property type="evidence" value="ECO:0007669"/>
    <property type="project" value="UniProtKB-SubCell"/>
</dbReference>
<dbReference type="GO" id="GO:0046872">
    <property type="term" value="F:metal ion binding"/>
    <property type="evidence" value="ECO:0007669"/>
    <property type="project" value="UniProtKB-KW"/>
</dbReference>
<dbReference type="GO" id="GO:0005385">
    <property type="term" value="F:zinc ion transmembrane transporter activity"/>
    <property type="evidence" value="ECO:0007669"/>
    <property type="project" value="UniProtKB-UniRule"/>
</dbReference>
<dbReference type="HAMAP" id="MF_00548">
    <property type="entry name" value="ZupT"/>
    <property type="match status" value="1"/>
</dbReference>
<dbReference type="InterPro" id="IPR003689">
    <property type="entry name" value="ZIP"/>
</dbReference>
<dbReference type="InterPro" id="IPR023498">
    <property type="entry name" value="Zn_transptr_ZupT"/>
</dbReference>
<dbReference type="NCBIfam" id="NF003243">
    <property type="entry name" value="PRK04201.1"/>
    <property type="match status" value="1"/>
</dbReference>
<dbReference type="PANTHER" id="PTHR11040:SF205">
    <property type="entry name" value="ZINC TRANSPORTER ZUPT"/>
    <property type="match status" value="1"/>
</dbReference>
<dbReference type="PANTHER" id="PTHR11040">
    <property type="entry name" value="ZINC/IRON TRANSPORTER"/>
    <property type="match status" value="1"/>
</dbReference>
<dbReference type="Pfam" id="PF02535">
    <property type="entry name" value="Zip"/>
    <property type="match status" value="2"/>
</dbReference>
<feature type="chain" id="PRO_0000207279" description="Zinc transporter ZupT">
    <location>
        <begin position="1"/>
        <end position="257"/>
    </location>
</feature>
<feature type="transmembrane region" description="Helical" evidence="1">
    <location>
        <begin position="5"/>
        <end position="25"/>
    </location>
</feature>
<feature type="transmembrane region" description="Helical" evidence="1">
    <location>
        <begin position="32"/>
        <end position="52"/>
    </location>
</feature>
<feature type="transmembrane region" description="Helical" evidence="1">
    <location>
        <begin position="61"/>
        <end position="81"/>
    </location>
</feature>
<feature type="transmembrane region" description="Helical" evidence="1">
    <location>
        <begin position="109"/>
        <end position="129"/>
    </location>
</feature>
<feature type="transmembrane region" description="Helical" evidence="1">
    <location>
        <begin position="137"/>
        <end position="157"/>
    </location>
</feature>
<feature type="transmembrane region" description="Helical" evidence="1">
    <location>
        <begin position="171"/>
        <end position="191"/>
    </location>
</feature>
<feature type="transmembrane region" description="Helical" evidence="1">
    <location>
        <begin position="195"/>
        <end position="215"/>
    </location>
</feature>
<feature type="transmembrane region" description="Helical" evidence="1">
    <location>
        <begin position="236"/>
        <end position="256"/>
    </location>
</feature>
<feature type="binding site" description="M2 metal binding site" evidence="1">
    <location>
        <position position="120"/>
    </location>
    <ligand>
        <name>Fe(2+)</name>
        <dbReference type="ChEBI" id="CHEBI:29033"/>
    </ligand>
</feature>
<feature type="binding site" description="M2 metal binding site" evidence="1">
    <location>
        <position position="123"/>
    </location>
    <ligand>
        <name>Fe(2+)</name>
        <dbReference type="ChEBI" id="CHEBI:29033"/>
    </ligand>
</feature>
<feature type="binding site" description="M1 metal binding site" evidence="1">
    <location>
        <position position="123"/>
    </location>
    <ligand>
        <name>Zn(2+)</name>
        <dbReference type="ChEBI" id="CHEBI:29105"/>
    </ligand>
</feature>
<feature type="binding site" description="M1 metal binding site" evidence="1">
    <location>
        <position position="148"/>
    </location>
    <ligand>
        <name>Zn(2+)</name>
        <dbReference type="ChEBI" id="CHEBI:29105"/>
    </ligand>
</feature>
<feature type="binding site" description="M2 metal binding site" evidence="1">
    <location>
        <position position="149"/>
    </location>
    <ligand>
        <name>Fe(2+)</name>
        <dbReference type="ChEBI" id="CHEBI:29033"/>
    </ligand>
</feature>
<feature type="binding site" description="M2 metal binding site" evidence="1">
    <location>
        <position position="152"/>
    </location>
    <ligand>
        <name>Fe(2+)</name>
        <dbReference type="ChEBI" id="CHEBI:29033"/>
    </ligand>
</feature>
<feature type="binding site" description="M1 metal binding site" evidence="1">
    <location>
        <position position="152"/>
    </location>
    <ligand>
        <name>Zn(2+)</name>
        <dbReference type="ChEBI" id="CHEBI:29105"/>
    </ligand>
</feature>
<feature type="binding site" description="M2 metal binding site" evidence="1">
    <location>
        <position position="181"/>
    </location>
    <ligand>
        <name>Fe(2+)</name>
        <dbReference type="ChEBI" id="CHEBI:29033"/>
    </ligand>
</feature>
<sequence>MSVPLILTILAGAATFIGAFLGVLGQKPSNRLLAFSLGFAAGIMLLISLMEMLPAALAAEGMSPVLGYGMFIFGLLGYFGLDRMLPHAHPQDLMQKSVQLLPKSIKRTAILLTLGISLHNFPEGIATFVTASSNLELGFGIALAVALHNIPEGLAVAGPVYAATGSKRTAILWAGISGLAEILGGVLAWLILGSMISPVVMAAIMAAVAGIMVALSVDELMPLAKEIDPNNNPSYGVLCGMSVMGFSLVLLQTAGIG</sequence>
<gene>
    <name evidence="1" type="primary">zupT</name>
    <name type="ordered locus">SF3080</name>
    <name type="ordered locus">S3285</name>
</gene>
<evidence type="ECO:0000255" key="1">
    <source>
        <dbReference type="HAMAP-Rule" id="MF_00548"/>
    </source>
</evidence>
<name>ZUPT_SHIFL</name>
<reference key="1">
    <citation type="journal article" date="2002" name="Nucleic Acids Res.">
        <title>Genome sequence of Shigella flexneri 2a: insights into pathogenicity through comparison with genomes of Escherichia coli K12 and O157.</title>
        <authorList>
            <person name="Jin Q."/>
            <person name="Yuan Z."/>
            <person name="Xu J."/>
            <person name="Wang Y."/>
            <person name="Shen Y."/>
            <person name="Lu W."/>
            <person name="Wang J."/>
            <person name="Liu H."/>
            <person name="Yang J."/>
            <person name="Yang F."/>
            <person name="Zhang X."/>
            <person name="Zhang J."/>
            <person name="Yang G."/>
            <person name="Wu H."/>
            <person name="Qu D."/>
            <person name="Dong J."/>
            <person name="Sun L."/>
            <person name="Xue Y."/>
            <person name="Zhao A."/>
            <person name="Gao Y."/>
            <person name="Zhu J."/>
            <person name="Kan B."/>
            <person name="Ding K."/>
            <person name="Chen S."/>
            <person name="Cheng H."/>
            <person name="Yao Z."/>
            <person name="He B."/>
            <person name="Chen R."/>
            <person name="Ma D."/>
            <person name="Qiang B."/>
            <person name="Wen Y."/>
            <person name="Hou Y."/>
            <person name="Yu J."/>
        </authorList>
    </citation>
    <scope>NUCLEOTIDE SEQUENCE [LARGE SCALE GENOMIC DNA]</scope>
    <source>
        <strain>301 / Serotype 2a</strain>
    </source>
</reference>
<reference key="2">
    <citation type="journal article" date="2003" name="Infect. Immun.">
        <title>Complete genome sequence and comparative genomics of Shigella flexneri serotype 2a strain 2457T.</title>
        <authorList>
            <person name="Wei J."/>
            <person name="Goldberg M.B."/>
            <person name="Burland V."/>
            <person name="Venkatesan M.M."/>
            <person name="Deng W."/>
            <person name="Fournier G."/>
            <person name="Mayhew G.F."/>
            <person name="Plunkett G. III"/>
            <person name="Rose D.J."/>
            <person name="Darling A."/>
            <person name="Mau B."/>
            <person name="Perna N.T."/>
            <person name="Payne S.M."/>
            <person name="Runyen-Janecky L.J."/>
            <person name="Zhou S."/>
            <person name="Schwartz D.C."/>
            <person name="Blattner F.R."/>
        </authorList>
    </citation>
    <scope>NUCLEOTIDE SEQUENCE [LARGE SCALE GENOMIC DNA]</scope>
    <source>
        <strain>ATCC 700930 / 2457T / Serotype 2a</strain>
    </source>
</reference>
<comment type="function">
    <text evidence="1">Mediates zinc uptake. May also transport other divalent cations.</text>
</comment>
<comment type="catalytic activity">
    <reaction evidence="1">
        <text>Zn(2+)(in) = Zn(2+)(out)</text>
        <dbReference type="Rhea" id="RHEA:29351"/>
        <dbReference type="ChEBI" id="CHEBI:29105"/>
    </reaction>
</comment>
<comment type="subcellular location">
    <subcellularLocation>
        <location evidence="1">Cell inner membrane</location>
        <topology evidence="1">Multi-pass membrane protein</topology>
    </subcellularLocation>
</comment>
<comment type="similarity">
    <text evidence="1">Belongs to the ZIP transporter (TC 2.A.5) family. ZupT subfamily.</text>
</comment>
<protein>
    <recommendedName>
        <fullName evidence="1">Zinc transporter ZupT</fullName>
    </recommendedName>
</protein>
<accession>Q7UBJ3</accession>
<accession>Q83JK5</accession>